<name>PEPE_ECO5E</name>
<reference key="1">
    <citation type="journal article" date="2011" name="Proc. Natl. Acad. Sci. U.S.A.">
        <title>Genomic anatomy of Escherichia coli O157:H7 outbreaks.</title>
        <authorList>
            <person name="Eppinger M."/>
            <person name="Mammel M.K."/>
            <person name="Leclerc J.E."/>
            <person name="Ravel J."/>
            <person name="Cebula T.A."/>
        </authorList>
    </citation>
    <scope>NUCLEOTIDE SEQUENCE [LARGE SCALE GENOMIC DNA]</scope>
    <source>
        <strain>EC4115 / EHEC</strain>
    </source>
</reference>
<keyword id="KW-0963">Cytoplasm</keyword>
<keyword id="KW-0224">Dipeptidase</keyword>
<keyword id="KW-0378">Hydrolase</keyword>
<keyword id="KW-0645">Protease</keyword>
<keyword id="KW-0720">Serine protease</keyword>
<accession>B5Z0B3</accession>
<proteinExistence type="inferred from homology"/>
<dbReference type="EC" id="3.4.13.21" evidence="1"/>
<dbReference type="EMBL" id="CP001164">
    <property type="protein sequence ID" value="ACI37408.1"/>
    <property type="molecule type" value="Genomic_DNA"/>
</dbReference>
<dbReference type="RefSeq" id="WP_000421763.1">
    <property type="nucleotide sequence ID" value="NC_011353.1"/>
</dbReference>
<dbReference type="SMR" id="B5Z0B3"/>
<dbReference type="MEROPS" id="S51.001"/>
<dbReference type="GeneID" id="93777874"/>
<dbReference type="KEGG" id="ecf:ECH74115_5491"/>
<dbReference type="HOGENOM" id="CLU_071689_0_0_6"/>
<dbReference type="GO" id="GO:0005737">
    <property type="term" value="C:cytoplasm"/>
    <property type="evidence" value="ECO:0007669"/>
    <property type="project" value="UniProtKB-SubCell"/>
</dbReference>
<dbReference type="GO" id="GO:0016805">
    <property type="term" value="F:dipeptidase activity"/>
    <property type="evidence" value="ECO:0007669"/>
    <property type="project" value="UniProtKB-UniRule"/>
</dbReference>
<dbReference type="GO" id="GO:0008236">
    <property type="term" value="F:serine-type peptidase activity"/>
    <property type="evidence" value="ECO:0007669"/>
    <property type="project" value="UniProtKB-KW"/>
</dbReference>
<dbReference type="GO" id="GO:0006508">
    <property type="term" value="P:proteolysis"/>
    <property type="evidence" value="ECO:0007669"/>
    <property type="project" value="UniProtKB-UniRule"/>
</dbReference>
<dbReference type="CDD" id="cd03146">
    <property type="entry name" value="GAT1_Peptidase_E"/>
    <property type="match status" value="1"/>
</dbReference>
<dbReference type="FunFam" id="3.40.50.880:FF:000007">
    <property type="entry name" value="Peptidase E"/>
    <property type="match status" value="1"/>
</dbReference>
<dbReference type="Gene3D" id="3.40.50.880">
    <property type="match status" value="1"/>
</dbReference>
<dbReference type="HAMAP" id="MF_00510">
    <property type="entry name" value="Peptidase_E"/>
    <property type="match status" value="1"/>
</dbReference>
<dbReference type="InterPro" id="IPR029062">
    <property type="entry name" value="Class_I_gatase-like"/>
</dbReference>
<dbReference type="InterPro" id="IPR005320">
    <property type="entry name" value="Peptidase_S51"/>
</dbReference>
<dbReference type="InterPro" id="IPR023172">
    <property type="entry name" value="Peptidase_S51_dipeptidase-E"/>
</dbReference>
<dbReference type="NCBIfam" id="NF003642">
    <property type="entry name" value="PRK05282.1"/>
    <property type="match status" value="1"/>
</dbReference>
<dbReference type="PANTHER" id="PTHR20842:SF0">
    <property type="entry name" value="ALPHA-ASPARTYL DIPEPTIDASE"/>
    <property type="match status" value="1"/>
</dbReference>
<dbReference type="PANTHER" id="PTHR20842">
    <property type="entry name" value="PROTEASE S51 ALPHA-ASPARTYL DIPEPTIDASE"/>
    <property type="match status" value="1"/>
</dbReference>
<dbReference type="Pfam" id="PF03575">
    <property type="entry name" value="Peptidase_S51"/>
    <property type="match status" value="1"/>
</dbReference>
<dbReference type="SUPFAM" id="SSF52317">
    <property type="entry name" value="Class I glutamine amidotransferase-like"/>
    <property type="match status" value="1"/>
</dbReference>
<evidence type="ECO:0000255" key="1">
    <source>
        <dbReference type="HAMAP-Rule" id="MF_00510"/>
    </source>
</evidence>
<feature type="chain" id="PRO_1000127241" description="Peptidase E">
    <location>
        <begin position="1"/>
        <end position="229"/>
    </location>
</feature>
<feature type="active site" description="Charge relay system" evidence="1">
    <location>
        <position position="120"/>
    </location>
</feature>
<feature type="active site" description="Charge relay system" evidence="1">
    <location>
        <position position="135"/>
    </location>
</feature>
<feature type="active site" description="Charge relay system" evidence="1">
    <location>
        <position position="157"/>
    </location>
</feature>
<gene>
    <name evidence="1" type="primary">pepE</name>
    <name type="ordered locus">ECH74115_5491</name>
</gene>
<sequence length="229" mass="24570">MELLLLSNSTLPGKAWLEHALPLIAEQLQGRRSAVFIPFAGVTQTWDDYTAKTAAVLAPLGVSVTGIHSVVDPVAAIENAEIVIVGGGNTFQLLKQCRERGLLAPITDVVKRGALYIGWSAGANLACPTIRTTNDMPIVDPQGFDALNLFPLQINPHFTNALPEGHKGETREQRIRELLVVAPELTIIGLPEGNWITVSKGHATLGGPNTTYVFKAGEEAVPLEAGHRF</sequence>
<comment type="function">
    <text evidence="1">Hydrolyzes dipeptides containing N-terminal aspartate residues. May play a role in allowing the cell to use peptide aspartate to spare carbon otherwise required for the synthesis of the aspartate family of amino acids.</text>
</comment>
<comment type="catalytic activity">
    <reaction evidence="1">
        <text>Dipeptidase E catalyzes the hydrolysis of dipeptides Asp-|-Xaa. It does not act on peptides with N-terminal Glu, Asn or Gln, nor does it cleave isoaspartyl peptides.</text>
        <dbReference type="EC" id="3.4.13.21"/>
    </reaction>
</comment>
<comment type="subcellular location">
    <subcellularLocation>
        <location evidence="1">Cytoplasm</location>
    </subcellularLocation>
</comment>
<comment type="similarity">
    <text evidence="1">Belongs to the peptidase S51 family.</text>
</comment>
<protein>
    <recommendedName>
        <fullName evidence="1">Peptidase E</fullName>
        <ecNumber evidence="1">3.4.13.21</ecNumber>
    </recommendedName>
    <alternativeName>
        <fullName evidence="1">Alpha-aspartyl dipeptidase</fullName>
    </alternativeName>
    <alternativeName>
        <fullName evidence="1">Asp-specific dipeptidase</fullName>
    </alternativeName>
    <alternativeName>
        <fullName evidence="1">Dipeptidase E</fullName>
    </alternativeName>
</protein>
<organism>
    <name type="scientific">Escherichia coli O157:H7 (strain EC4115 / EHEC)</name>
    <dbReference type="NCBI Taxonomy" id="444450"/>
    <lineage>
        <taxon>Bacteria</taxon>
        <taxon>Pseudomonadati</taxon>
        <taxon>Pseudomonadota</taxon>
        <taxon>Gammaproteobacteria</taxon>
        <taxon>Enterobacterales</taxon>
        <taxon>Enterobacteriaceae</taxon>
        <taxon>Escherichia</taxon>
    </lineage>
</organism>